<organism>
    <name type="scientific">Mycobacterium bovis (strain BCG / Pasteur 1173P2)</name>
    <dbReference type="NCBI Taxonomy" id="410289"/>
    <lineage>
        <taxon>Bacteria</taxon>
        <taxon>Bacillati</taxon>
        <taxon>Actinomycetota</taxon>
        <taxon>Actinomycetes</taxon>
        <taxon>Mycobacteriales</taxon>
        <taxon>Mycobacteriaceae</taxon>
        <taxon>Mycobacterium</taxon>
        <taxon>Mycobacterium tuberculosis complex</taxon>
    </lineage>
</organism>
<evidence type="ECO:0000255" key="1">
    <source>
        <dbReference type="HAMAP-Rule" id="MF_00360"/>
    </source>
</evidence>
<evidence type="ECO:0000305" key="2"/>
<feature type="chain" id="PRO_1000005297" description="Small ribosomal subunit protein bS6">
    <location>
        <begin position="1"/>
        <end position="96"/>
    </location>
</feature>
<dbReference type="EMBL" id="AM408590">
    <property type="protein sequence ID" value="CAL70068.1"/>
    <property type="molecule type" value="Genomic_DNA"/>
</dbReference>
<dbReference type="RefSeq" id="WP_003400520.1">
    <property type="nucleotide sequence ID" value="NC_008769.1"/>
</dbReference>
<dbReference type="SMR" id="A1KEM1"/>
<dbReference type="GeneID" id="45424012"/>
<dbReference type="KEGG" id="mbb:BCG_0084"/>
<dbReference type="HOGENOM" id="CLU_113441_5_3_11"/>
<dbReference type="Proteomes" id="UP000001472">
    <property type="component" value="Chromosome"/>
</dbReference>
<dbReference type="GO" id="GO:0005737">
    <property type="term" value="C:cytoplasm"/>
    <property type="evidence" value="ECO:0007669"/>
    <property type="project" value="UniProtKB-ARBA"/>
</dbReference>
<dbReference type="GO" id="GO:1990904">
    <property type="term" value="C:ribonucleoprotein complex"/>
    <property type="evidence" value="ECO:0007669"/>
    <property type="project" value="UniProtKB-KW"/>
</dbReference>
<dbReference type="GO" id="GO:0005840">
    <property type="term" value="C:ribosome"/>
    <property type="evidence" value="ECO:0007669"/>
    <property type="project" value="UniProtKB-KW"/>
</dbReference>
<dbReference type="GO" id="GO:0070181">
    <property type="term" value="F:small ribosomal subunit rRNA binding"/>
    <property type="evidence" value="ECO:0007669"/>
    <property type="project" value="TreeGrafter"/>
</dbReference>
<dbReference type="GO" id="GO:0003735">
    <property type="term" value="F:structural constituent of ribosome"/>
    <property type="evidence" value="ECO:0007669"/>
    <property type="project" value="InterPro"/>
</dbReference>
<dbReference type="GO" id="GO:0006412">
    <property type="term" value="P:translation"/>
    <property type="evidence" value="ECO:0007669"/>
    <property type="project" value="UniProtKB-UniRule"/>
</dbReference>
<dbReference type="CDD" id="cd00473">
    <property type="entry name" value="bS6"/>
    <property type="match status" value="1"/>
</dbReference>
<dbReference type="FunFam" id="3.30.70.60:FF:000002">
    <property type="entry name" value="30S ribosomal protein S6"/>
    <property type="match status" value="1"/>
</dbReference>
<dbReference type="Gene3D" id="3.30.70.60">
    <property type="match status" value="1"/>
</dbReference>
<dbReference type="HAMAP" id="MF_00360">
    <property type="entry name" value="Ribosomal_bS6"/>
    <property type="match status" value="1"/>
</dbReference>
<dbReference type="InterPro" id="IPR000529">
    <property type="entry name" value="Ribosomal_bS6"/>
</dbReference>
<dbReference type="InterPro" id="IPR020815">
    <property type="entry name" value="Ribosomal_bS6_CS"/>
</dbReference>
<dbReference type="InterPro" id="IPR035980">
    <property type="entry name" value="Ribosomal_bS6_sf"/>
</dbReference>
<dbReference type="InterPro" id="IPR020814">
    <property type="entry name" value="Ribosomal_S6_plastid/chlpt"/>
</dbReference>
<dbReference type="InterPro" id="IPR014717">
    <property type="entry name" value="Transl_elong_EF1B/ribsomal_bS6"/>
</dbReference>
<dbReference type="NCBIfam" id="TIGR00166">
    <property type="entry name" value="S6"/>
    <property type="match status" value="1"/>
</dbReference>
<dbReference type="PANTHER" id="PTHR21011">
    <property type="entry name" value="MITOCHONDRIAL 28S RIBOSOMAL PROTEIN S6"/>
    <property type="match status" value="1"/>
</dbReference>
<dbReference type="PANTHER" id="PTHR21011:SF1">
    <property type="entry name" value="SMALL RIBOSOMAL SUBUNIT PROTEIN BS6M"/>
    <property type="match status" value="1"/>
</dbReference>
<dbReference type="Pfam" id="PF01250">
    <property type="entry name" value="Ribosomal_S6"/>
    <property type="match status" value="1"/>
</dbReference>
<dbReference type="SUPFAM" id="SSF54995">
    <property type="entry name" value="Ribosomal protein S6"/>
    <property type="match status" value="1"/>
</dbReference>
<dbReference type="PROSITE" id="PS01048">
    <property type="entry name" value="RIBOSOMAL_S6"/>
    <property type="match status" value="1"/>
</dbReference>
<keyword id="KW-0687">Ribonucleoprotein</keyword>
<keyword id="KW-0689">Ribosomal protein</keyword>
<keyword id="KW-0694">RNA-binding</keyword>
<keyword id="KW-0699">rRNA-binding</keyword>
<name>RS6_MYCBP</name>
<proteinExistence type="inferred from homology"/>
<protein>
    <recommendedName>
        <fullName evidence="1">Small ribosomal subunit protein bS6</fullName>
    </recommendedName>
    <alternativeName>
        <fullName evidence="2">30S ribosomal protein S6</fullName>
    </alternativeName>
</protein>
<gene>
    <name evidence="1" type="primary">rpsF</name>
    <name type="ordered locus">BCG_0084</name>
</gene>
<reference key="1">
    <citation type="journal article" date="2007" name="Proc. Natl. Acad. Sci. U.S.A.">
        <title>Genome plasticity of BCG and impact on vaccine efficacy.</title>
        <authorList>
            <person name="Brosch R."/>
            <person name="Gordon S.V."/>
            <person name="Garnier T."/>
            <person name="Eiglmeier K."/>
            <person name="Frigui W."/>
            <person name="Valenti P."/>
            <person name="Dos Santos S."/>
            <person name="Duthoy S."/>
            <person name="Lacroix C."/>
            <person name="Garcia-Pelayo C."/>
            <person name="Inwald J.K."/>
            <person name="Golby P."/>
            <person name="Garcia J.N."/>
            <person name="Hewinson R.G."/>
            <person name="Behr M.A."/>
            <person name="Quail M.A."/>
            <person name="Churcher C."/>
            <person name="Barrell B.G."/>
            <person name="Parkhill J."/>
            <person name="Cole S.T."/>
        </authorList>
    </citation>
    <scope>NUCLEOTIDE SEQUENCE [LARGE SCALE GENOMIC DNA]</scope>
    <source>
        <strain>BCG / Pasteur 1173P2</strain>
    </source>
</reference>
<sequence>MRPYEIMVILDPTLDERTVAPSLETFLNVVRKDGGKVEKVDIWGKRRLAYEIAKHAEGIYVVIDVKAAPATVSELDRQLSLNESVLRTKVMRTDKH</sequence>
<comment type="function">
    <text evidence="1">Binds together with bS18 to 16S ribosomal RNA.</text>
</comment>
<comment type="similarity">
    <text evidence="1">Belongs to the bacterial ribosomal protein bS6 family.</text>
</comment>
<accession>A1KEM1</accession>